<keyword id="KW-0030">Aminoacyl-tRNA synthetase</keyword>
<keyword id="KW-0067">ATP-binding</keyword>
<keyword id="KW-0963">Cytoplasm</keyword>
<keyword id="KW-0436">Ligase</keyword>
<keyword id="KW-0547">Nucleotide-binding</keyword>
<keyword id="KW-0648">Protein biosynthesis</keyword>
<dbReference type="EC" id="6.1.1.15" evidence="1"/>
<dbReference type="EMBL" id="CP001068">
    <property type="protein sequence ID" value="ACD28184.1"/>
    <property type="molecule type" value="Genomic_DNA"/>
</dbReference>
<dbReference type="SMR" id="B2UCU9"/>
<dbReference type="STRING" id="402626.Rpic_3061"/>
<dbReference type="KEGG" id="rpi:Rpic_3061"/>
<dbReference type="eggNOG" id="COG0442">
    <property type="taxonomic scope" value="Bacteria"/>
</dbReference>
<dbReference type="HOGENOM" id="CLU_016739_0_0_4"/>
<dbReference type="GO" id="GO:0005829">
    <property type="term" value="C:cytosol"/>
    <property type="evidence" value="ECO:0007669"/>
    <property type="project" value="TreeGrafter"/>
</dbReference>
<dbReference type="GO" id="GO:0002161">
    <property type="term" value="F:aminoacyl-tRNA deacylase activity"/>
    <property type="evidence" value="ECO:0007669"/>
    <property type="project" value="InterPro"/>
</dbReference>
<dbReference type="GO" id="GO:0005524">
    <property type="term" value="F:ATP binding"/>
    <property type="evidence" value="ECO:0007669"/>
    <property type="project" value="UniProtKB-UniRule"/>
</dbReference>
<dbReference type="GO" id="GO:0004827">
    <property type="term" value="F:proline-tRNA ligase activity"/>
    <property type="evidence" value="ECO:0007669"/>
    <property type="project" value="UniProtKB-UniRule"/>
</dbReference>
<dbReference type="GO" id="GO:0006433">
    <property type="term" value="P:prolyl-tRNA aminoacylation"/>
    <property type="evidence" value="ECO:0007669"/>
    <property type="project" value="UniProtKB-UniRule"/>
</dbReference>
<dbReference type="CDD" id="cd04334">
    <property type="entry name" value="ProRS-INS"/>
    <property type="match status" value="1"/>
</dbReference>
<dbReference type="CDD" id="cd00861">
    <property type="entry name" value="ProRS_anticodon_short"/>
    <property type="match status" value="1"/>
</dbReference>
<dbReference type="CDD" id="cd00779">
    <property type="entry name" value="ProRS_core_prok"/>
    <property type="match status" value="1"/>
</dbReference>
<dbReference type="FunFam" id="3.30.930.10:FF:000012">
    <property type="entry name" value="Proline--tRNA ligase"/>
    <property type="match status" value="1"/>
</dbReference>
<dbReference type="FunFam" id="3.30.930.10:FF:000097">
    <property type="entry name" value="Proline--tRNA ligase"/>
    <property type="match status" value="1"/>
</dbReference>
<dbReference type="Gene3D" id="3.40.50.800">
    <property type="entry name" value="Anticodon-binding domain"/>
    <property type="match status" value="1"/>
</dbReference>
<dbReference type="Gene3D" id="3.30.930.10">
    <property type="entry name" value="Bira Bifunctional Protein, Domain 2"/>
    <property type="match status" value="2"/>
</dbReference>
<dbReference type="Gene3D" id="3.90.960.10">
    <property type="entry name" value="YbaK/aminoacyl-tRNA synthetase-associated domain"/>
    <property type="match status" value="1"/>
</dbReference>
<dbReference type="HAMAP" id="MF_01569">
    <property type="entry name" value="Pro_tRNA_synth_type1"/>
    <property type="match status" value="1"/>
</dbReference>
<dbReference type="InterPro" id="IPR002314">
    <property type="entry name" value="aa-tRNA-synt_IIb"/>
</dbReference>
<dbReference type="InterPro" id="IPR006195">
    <property type="entry name" value="aa-tRNA-synth_II"/>
</dbReference>
<dbReference type="InterPro" id="IPR045864">
    <property type="entry name" value="aa-tRNA-synth_II/BPL/LPL"/>
</dbReference>
<dbReference type="InterPro" id="IPR004154">
    <property type="entry name" value="Anticodon-bd"/>
</dbReference>
<dbReference type="InterPro" id="IPR036621">
    <property type="entry name" value="Anticodon-bd_dom_sf"/>
</dbReference>
<dbReference type="InterPro" id="IPR002316">
    <property type="entry name" value="Pro-tRNA-ligase_IIa"/>
</dbReference>
<dbReference type="InterPro" id="IPR004500">
    <property type="entry name" value="Pro-tRNA-synth_IIa_bac-type"/>
</dbReference>
<dbReference type="InterPro" id="IPR023717">
    <property type="entry name" value="Pro-tRNA-Synthase_IIa_type1"/>
</dbReference>
<dbReference type="InterPro" id="IPR050062">
    <property type="entry name" value="Pro-tRNA_synthetase"/>
</dbReference>
<dbReference type="InterPro" id="IPR044140">
    <property type="entry name" value="ProRS_anticodon_short"/>
</dbReference>
<dbReference type="InterPro" id="IPR033730">
    <property type="entry name" value="ProRS_core_prok"/>
</dbReference>
<dbReference type="InterPro" id="IPR036754">
    <property type="entry name" value="YbaK/aa-tRNA-synt-asso_dom_sf"/>
</dbReference>
<dbReference type="InterPro" id="IPR007214">
    <property type="entry name" value="YbaK/aa-tRNA-synth-assoc-dom"/>
</dbReference>
<dbReference type="NCBIfam" id="NF006625">
    <property type="entry name" value="PRK09194.1"/>
    <property type="match status" value="1"/>
</dbReference>
<dbReference type="NCBIfam" id="TIGR00409">
    <property type="entry name" value="proS_fam_II"/>
    <property type="match status" value="1"/>
</dbReference>
<dbReference type="PANTHER" id="PTHR42753">
    <property type="entry name" value="MITOCHONDRIAL RIBOSOME PROTEIN L39/PROLYL-TRNA LIGASE FAMILY MEMBER"/>
    <property type="match status" value="1"/>
</dbReference>
<dbReference type="PANTHER" id="PTHR42753:SF2">
    <property type="entry name" value="PROLINE--TRNA LIGASE"/>
    <property type="match status" value="1"/>
</dbReference>
<dbReference type="Pfam" id="PF03129">
    <property type="entry name" value="HGTP_anticodon"/>
    <property type="match status" value="1"/>
</dbReference>
<dbReference type="Pfam" id="PF00587">
    <property type="entry name" value="tRNA-synt_2b"/>
    <property type="match status" value="1"/>
</dbReference>
<dbReference type="Pfam" id="PF04073">
    <property type="entry name" value="tRNA_edit"/>
    <property type="match status" value="1"/>
</dbReference>
<dbReference type="PIRSF" id="PIRSF001535">
    <property type="entry name" value="ProRS_1"/>
    <property type="match status" value="1"/>
</dbReference>
<dbReference type="PRINTS" id="PR01046">
    <property type="entry name" value="TRNASYNTHPRO"/>
</dbReference>
<dbReference type="SUPFAM" id="SSF52954">
    <property type="entry name" value="Class II aaRS ABD-related"/>
    <property type="match status" value="1"/>
</dbReference>
<dbReference type="SUPFAM" id="SSF55681">
    <property type="entry name" value="Class II aaRS and biotin synthetases"/>
    <property type="match status" value="1"/>
</dbReference>
<dbReference type="SUPFAM" id="SSF55826">
    <property type="entry name" value="YbaK/ProRS associated domain"/>
    <property type="match status" value="1"/>
</dbReference>
<dbReference type="PROSITE" id="PS50862">
    <property type="entry name" value="AA_TRNA_LIGASE_II"/>
    <property type="match status" value="1"/>
</dbReference>
<reference key="1">
    <citation type="submission" date="2008-05" db="EMBL/GenBank/DDBJ databases">
        <title>Complete sequence of chromosome 1 of Ralstonia pickettii 12J.</title>
        <authorList>
            <person name="Lucas S."/>
            <person name="Copeland A."/>
            <person name="Lapidus A."/>
            <person name="Glavina del Rio T."/>
            <person name="Dalin E."/>
            <person name="Tice H."/>
            <person name="Bruce D."/>
            <person name="Goodwin L."/>
            <person name="Pitluck S."/>
            <person name="Meincke L."/>
            <person name="Brettin T."/>
            <person name="Detter J.C."/>
            <person name="Han C."/>
            <person name="Kuske C.R."/>
            <person name="Schmutz J."/>
            <person name="Larimer F."/>
            <person name="Land M."/>
            <person name="Hauser L."/>
            <person name="Kyrpides N."/>
            <person name="Mikhailova N."/>
            <person name="Marsh T."/>
            <person name="Richardson P."/>
        </authorList>
    </citation>
    <scope>NUCLEOTIDE SEQUENCE [LARGE SCALE GENOMIC DNA]</scope>
    <source>
        <strain>12J</strain>
    </source>
</reference>
<sequence>MKASQFFISTLKEAPADAEIVSHKLMMRAGMIKKLGAGLYTYMPVGLRVIRKVEQIVREEMNAAGAVEVLMPVVQPGELWQETGRWDKMGDELLRFKDRHERDFVMQPTSEEVVTDIARTEIRSYKQLPVNFYQIQTKFRDERRPRFGIMRGREFTMKDAYSFDRDAEGLKVSYQKMYDAYTRIFQRFGLEFRAVAADNGAIGGSGSHEFHVIADTGEDAIIYCPDSDYAANIEAAEAVAPAAPRAAATEALTKTHTPGRAKCEAVAEQLGIPLQRTIKSIVLATEVEGGEPQIWLLLLRGDHELNEVKASKVPGLADFRFATEGEILRAFGTRPGYLGPVGTKLPVKVVADRTAAAMSDFVVGANEEDYHFTGVNWGRDLPEPEVYDLRNVVAGDASPDGKGTLAICRGIEVGHVFMLGTRYSEAMNATFLDENGKTQPMVMGCYGIGITRILGAAIEQNYDARGIIWPASIAPFQVVICPVGYDRSDAVREEADRLHAELVAAGIDVMLDDRGERPGAMFADWELIGVPFRVVVGDRGLKEGKLEFQGRRDEAATAVAPADVLATLKARLAQ</sequence>
<evidence type="ECO:0000255" key="1">
    <source>
        <dbReference type="HAMAP-Rule" id="MF_01569"/>
    </source>
</evidence>
<protein>
    <recommendedName>
        <fullName evidence="1">Proline--tRNA ligase</fullName>
        <ecNumber evidence="1">6.1.1.15</ecNumber>
    </recommendedName>
    <alternativeName>
        <fullName evidence="1">Prolyl-tRNA synthetase</fullName>
        <shortName evidence="1">ProRS</shortName>
    </alternativeName>
</protein>
<feature type="chain" id="PRO_1000199413" description="Proline--tRNA ligase">
    <location>
        <begin position="1"/>
        <end position="574"/>
    </location>
</feature>
<organism>
    <name type="scientific">Ralstonia pickettii (strain 12J)</name>
    <dbReference type="NCBI Taxonomy" id="402626"/>
    <lineage>
        <taxon>Bacteria</taxon>
        <taxon>Pseudomonadati</taxon>
        <taxon>Pseudomonadota</taxon>
        <taxon>Betaproteobacteria</taxon>
        <taxon>Burkholderiales</taxon>
        <taxon>Burkholderiaceae</taxon>
        <taxon>Ralstonia</taxon>
    </lineage>
</organism>
<name>SYP_RALPJ</name>
<gene>
    <name evidence="1" type="primary">proS</name>
    <name type="ordered locus">Rpic_3061</name>
</gene>
<comment type="function">
    <text evidence="1">Catalyzes the attachment of proline to tRNA(Pro) in a two-step reaction: proline is first activated by ATP to form Pro-AMP and then transferred to the acceptor end of tRNA(Pro). As ProRS can inadvertently accommodate and process non-cognate amino acids such as alanine and cysteine, to avoid such errors it has two additional distinct editing activities against alanine. One activity is designated as 'pretransfer' editing and involves the tRNA(Pro)-independent hydrolysis of activated Ala-AMP. The other activity is designated 'posttransfer' editing and involves deacylation of mischarged Ala-tRNA(Pro). The misacylated Cys-tRNA(Pro) is not edited by ProRS.</text>
</comment>
<comment type="catalytic activity">
    <reaction evidence="1">
        <text>tRNA(Pro) + L-proline + ATP = L-prolyl-tRNA(Pro) + AMP + diphosphate</text>
        <dbReference type="Rhea" id="RHEA:14305"/>
        <dbReference type="Rhea" id="RHEA-COMP:9700"/>
        <dbReference type="Rhea" id="RHEA-COMP:9702"/>
        <dbReference type="ChEBI" id="CHEBI:30616"/>
        <dbReference type="ChEBI" id="CHEBI:33019"/>
        <dbReference type="ChEBI" id="CHEBI:60039"/>
        <dbReference type="ChEBI" id="CHEBI:78442"/>
        <dbReference type="ChEBI" id="CHEBI:78532"/>
        <dbReference type="ChEBI" id="CHEBI:456215"/>
        <dbReference type="EC" id="6.1.1.15"/>
    </reaction>
</comment>
<comment type="subunit">
    <text evidence="1">Homodimer.</text>
</comment>
<comment type="subcellular location">
    <subcellularLocation>
        <location evidence="1">Cytoplasm</location>
    </subcellularLocation>
</comment>
<comment type="domain">
    <text evidence="1">Consists of three domains: the N-terminal catalytic domain, the editing domain and the C-terminal anticodon-binding domain.</text>
</comment>
<comment type="similarity">
    <text evidence="1">Belongs to the class-II aminoacyl-tRNA synthetase family. ProS type 1 subfamily.</text>
</comment>
<proteinExistence type="inferred from homology"/>
<accession>B2UCU9</accession>